<gene>
    <name evidence="1" type="primary">ruvA</name>
    <name type="ordered locus">SpyM3_1803</name>
</gene>
<organism>
    <name type="scientific">Streptococcus pyogenes serotype M3 (strain ATCC BAA-595 / MGAS315)</name>
    <dbReference type="NCBI Taxonomy" id="198466"/>
    <lineage>
        <taxon>Bacteria</taxon>
        <taxon>Bacillati</taxon>
        <taxon>Bacillota</taxon>
        <taxon>Bacilli</taxon>
        <taxon>Lactobacillales</taxon>
        <taxon>Streptococcaceae</taxon>
        <taxon>Streptococcus</taxon>
    </lineage>
</organism>
<evidence type="ECO:0000255" key="1">
    <source>
        <dbReference type="HAMAP-Rule" id="MF_00031"/>
    </source>
</evidence>
<feature type="chain" id="PRO_0000094694" description="Holliday junction branch migration complex subunit RuvA">
    <location>
        <begin position="1"/>
        <end position="198"/>
    </location>
</feature>
<feature type="region of interest" description="Domain I" evidence="1">
    <location>
        <begin position="1"/>
        <end position="63"/>
    </location>
</feature>
<feature type="region of interest" description="Domain II" evidence="1">
    <location>
        <begin position="64"/>
        <end position="142"/>
    </location>
</feature>
<feature type="region of interest" description="Flexible linker" evidence="1">
    <location>
        <begin position="143"/>
        <end position="147"/>
    </location>
</feature>
<feature type="region of interest" description="Domain III" evidence="1">
    <location>
        <begin position="148"/>
        <end position="198"/>
    </location>
</feature>
<accession>P0DF48</accession>
<accession>P66752</accession>
<accession>Q99XN9</accession>
<name>RUVA_STRP3</name>
<sequence>MYDYIKGQLTKITAKYIVVEANGLGYMINVANPYSFTDSVNQLVTIYLHQVIREDAHLLFGFHTEDEKDVFLKLISVSGIGPTTALAIVAVDDNEGLVNAIDNSDIKYLMKFPKIGKKTAQQMVLDLAGKFVEAPQETGHTKARSNKAGNTQLDEAIEALLALGYKAKELKKIRAFFEGTSETAEQYIKSALKLLMKG</sequence>
<comment type="function">
    <text evidence="1">The RuvA-RuvB-RuvC complex processes Holliday junction (HJ) DNA during genetic recombination and DNA repair, while the RuvA-RuvB complex plays an important role in the rescue of blocked DNA replication forks via replication fork reversal (RFR). RuvA specifically binds to HJ cruciform DNA, conferring on it an open structure. The RuvB hexamer acts as an ATP-dependent pump, pulling dsDNA into and through the RuvAB complex. HJ branch migration allows RuvC to scan DNA until it finds its consensus sequence, where it cleaves and resolves the cruciform DNA.</text>
</comment>
<comment type="subunit">
    <text evidence="1">Homotetramer. Forms an RuvA(8)-RuvB(12)-Holliday junction (HJ) complex. HJ DNA is sandwiched between 2 RuvA tetramers; dsDNA enters through RuvA and exits via RuvB. An RuvB hexamer assembles on each DNA strand where it exits the tetramer. Each RuvB hexamer is contacted by two RuvA subunits (via domain III) on 2 adjacent RuvB subunits; this complex drives branch migration. In the full resolvosome a probable DNA-RuvA(4)-RuvB(12)-RuvC(2) complex forms which resolves the HJ.</text>
</comment>
<comment type="subcellular location">
    <subcellularLocation>
        <location evidence="1">Cytoplasm</location>
    </subcellularLocation>
</comment>
<comment type="domain">
    <text evidence="1">Has three domains with a flexible linker between the domains II and III and assumes an 'L' shape. Domain III is highly mobile and contacts RuvB.</text>
</comment>
<comment type="similarity">
    <text evidence="1">Belongs to the RuvA family.</text>
</comment>
<keyword id="KW-0963">Cytoplasm</keyword>
<keyword id="KW-0227">DNA damage</keyword>
<keyword id="KW-0233">DNA recombination</keyword>
<keyword id="KW-0234">DNA repair</keyword>
<keyword id="KW-0238">DNA-binding</keyword>
<dbReference type="EMBL" id="AE014074">
    <property type="protein sequence ID" value="AAM80410.1"/>
    <property type="molecule type" value="Genomic_DNA"/>
</dbReference>
<dbReference type="RefSeq" id="WP_002992186.1">
    <property type="nucleotide sequence ID" value="NC_004070.1"/>
</dbReference>
<dbReference type="SMR" id="P0DF48"/>
<dbReference type="GeneID" id="69901573"/>
<dbReference type="KEGG" id="spg:SpyM3_1803"/>
<dbReference type="HOGENOM" id="CLU_087936_1_0_9"/>
<dbReference type="Proteomes" id="UP000000564">
    <property type="component" value="Chromosome"/>
</dbReference>
<dbReference type="GO" id="GO:0005737">
    <property type="term" value="C:cytoplasm"/>
    <property type="evidence" value="ECO:0007669"/>
    <property type="project" value="UniProtKB-SubCell"/>
</dbReference>
<dbReference type="GO" id="GO:0009379">
    <property type="term" value="C:Holliday junction helicase complex"/>
    <property type="evidence" value="ECO:0007669"/>
    <property type="project" value="InterPro"/>
</dbReference>
<dbReference type="GO" id="GO:0048476">
    <property type="term" value="C:Holliday junction resolvase complex"/>
    <property type="evidence" value="ECO:0007669"/>
    <property type="project" value="UniProtKB-UniRule"/>
</dbReference>
<dbReference type="GO" id="GO:0005524">
    <property type="term" value="F:ATP binding"/>
    <property type="evidence" value="ECO:0007669"/>
    <property type="project" value="InterPro"/>
</dbReference>
<dbReference type="GO" id="GO:0000400">
    <property type="term" value="F:four-way junction DNA binding"/>
    <property type="evidence" value="ECO:0007669"/>
    <property type="project" value="UniProtKB-UniRule"/>
</dbReference>
<dbReference type="GO" id="GO:0009378">
    <property type="term" value="F:four-way junction helicase activity"/>
    <property type="evidence" value="ECO:0007669"/>
    <property type="project" value="InterPro"/>
</dbReference>
<dbReference type="GO" id="GO:0006310">
    <property type="term" value="P:DNA recombination"/>
    <property type="evidence" value="ECO:0007669"/>
    <property type="project" value="UniProtKB-UniRule"/>
</dbReference>
<dbReference type="GO" id="GO:0006281">
    <property type="term" value="P:DNA repair"/>
    <property type="evidence" value="ECO:0007669"/>
    <property type="project" value="UniProtKB-UniRule"/>
</dbReference>
<dbReference type="CDD" id="cd14332">
    <property type="entry name" value="UBA_RuvA_C"/>
    <property type="match status" value="1"/>
</dbReference>
<dbReference type="Gene3D" id="1.10.150.20">
    <property type="entry name" value="5' to 3' exonuclease, C-terminal subdomain"/>
    <property type="match status" value="1"/>
</dbReference>
<dbReference type="Gene3D" id="1.10.8.10">
    <property type="entry name" value="DNA helicase RuvA subunit, C-terminal domain"/>
    <property type="match status" value="1"/>
</dbReference>
<dbReference type="Gene3D" id="2.40.50.140">
    <property type="entry name" value="Nucleic acid-binding proteins"/>
    <property type="match status" value="1"/>
</dbReference>
<dbReference type="HAMAP" id="MF_00031">
    <property type="entry name" value="DNA_HJ_migration_RuvA"/>
    <property type="match status" value="1"/>
</dbReference>
<dbReference type="InterPro" id="IPR013849">
    <property type="entry name" value="DNA_helicase_Holl-junc_RuvA_I"/>
</dbReference>
<dbReference type="InterPro" id="IPR003583">
    <property type="entry name" value="Hlx-hairpin-Hlx_DNA-bd_motif"/>
</dbReference>
<dbReference type="InterPro" id="IPR012340">
    <property type="entry name" value="NA-bd_OB-fold"/>
</dbReference>
<dbReference type="InterPro" id="IPR000085">
    <property type="entry name" value="RuvA"/>
</dbReference>
<dbReference type="InterPro" id="IPR010994">
    <property type="entry name" value="RuvA_2-like"/>
</dbReference>
<dbReference type="InterPro" id="IPR011114">
    <property type="entry name" value="RuvA_C"/>
</dbReference>
<dbReference type="InterPro" id="IPR036267">
    <property type="entry name" value="RuvA_C_sf"/>
</dbReference>
<dbReference type="NCBIfam" id="TIGR00084">
    <property type="entry name" value="ruvA"/>
    <property type="match status" value="1"/>
</dbReference>
<dbReference type="Pfam" id="PF14520">
    <property type="entry name" value="HHH_5"/>
    <property type="match status" value="1"/>
</dbReference>
<dbReference type="Pfam" id="PF07499">
    <property type="entry name" value="RuvA_C"/>
    <property type="match status" value="1"/>
</dbReference>
<dbReference type="Pfam" id="PF01330">
    <property type="entry name" value="RuvA_N"/>
    <property type="match status" value="1"/>
</dbReference>
<dbReference type="SMART" id="SM00278">
    <property type="entry name" value="HhH1"/>
    <property type="match status" value="2"/>
</dbReference>
<dbReference type="SUPFAM" id="SSF46929">
    <property type="entry name" value="DNA helicase RuvA subunit, C-terminal domain"/>
    <property type="match status" value="1"/>
</dbReference>
<dbReference type="SUPFAM" id="SSF50249">
    <property type="entry name" value="Nucleic acid-binding proteins"/>
    <property type="match status" value="1"/>
</dbReference>
<dbReference type="SUPFAM" id="SSF47781">
    <property type="entry name" value="RuvA domain 2-like"/>
    <property type="match status" value="1"/>
</dbReference>
<proteinExistence type="inferred from homology"/>
<protein>
    <recommendedName>
        <fullName evidence="1">Holliday junction branch migration complex subunit RuvA</fullName>
    </recommendedName>
</protein>
<reference key="1">
    <citation type="journal article" date="2002" name="Proc. Natl. Acad. Sci. U.S.A.">
        <title>Genome sequence of a serotype M3 strain of group A Streptococcus: phage-encoded toxins, the high-virulence phenotype, and clone emergence.</title>
        <authorList>
            <person name="Beres S.B."/>
            <person name="Sylva G.L."/>
            <person name="Barbian K.D."/>
            <person name="Lei B."/>
            <person name="Hoff J.S."/>
            <person name="Mammarella N.D."/>
            <person name="Liu M.-Y."/>
            <person name="Smoot J.C."/>
            <person name="Porcella S.F."/>
            <person name="Parkins L.D."/>
            <person name="Campbell D.S."/>
            <person name="Smith T.M."/>
            <person name="McCormick J.K."/>
            <person name="Leung D.Y.M."/>
            <person name="Schlievert P.M."/>
            <person name="Musser J.M."/>
        </authorList>
    </citation>
    <scope>NUCLEOTIDE SEQUENCE [LARGE SCALE GENOMIC DNA]</scope>
    <source>
        <strain>ATCC BAA-595 / MGAS315</strain>
    </source>
</reference>